<proteinExistence type="inferred from homology"/>
<name>MQO_CHRSD</name>
<reference key="1">
    <citation type="journal article" date="2011" name="Stand. Genomic Sci.">
        <title>Complete genome sequence of the halophilic and highly halotolerant Chromohalobacter salexigens type strain (1H11(T)).</title>
        <authorList>
            <person name="Copeland A."/>
            <person name="O'Connor K."/>
            <person name="Lucas S."/>
            <person name="Lapidus A."/>
            <person name="Berry K.W."/>
            <person name="Detter J.C."/>
            <person name="Del Rio T.G."/>
            <person name="Hammon N."/>
            <person name="Dalin E."/>
            <person name="Tice H."/>
            <person name="Pitluck S."/>
            <person name="Bruce D."/>
            <person name="Goodwin L."/>
            <person name="Han C."/>
            <person name="Tapia R."/>
            <person name="Saunders E."/>
            <person name="Schmutz J."/>
            <person name="Brettin T."/>
            <person name="Larimer F."/>
            <person name="Land M."/>
            <person name="Hauser L."/>
            <person name="Vargas C."/>
            <person name="Nieto J.J."/>
            <person name="Kyrpides N.C."/>
            <person name="Ivanova N."/>
            <person name="Goker M."/>
            <person name="Klenk H.P."/>
            <person name="Csonka L.N."/>
            <person name="Woyke T."/>
        </authorList>
    </citation>
    <scope>NUCLEOTIDE SEQUENCE [LARGE SCALE GENOMIC DNA]</scope>
    <source>
        <strain>ATCC BAA-138 / DSM 3043 / CIP 106854 / NCIMB 13768 / 1H11</strain>
    </source>
</reference>
<sequence length="508" mass="55933">MVGTHMDESVDIVLVGAGVMSATLATLLHELEPDARIEIIERLDSTASESSFAWNNAGTGHAGLCELNYTPRADDGSISLDKAIHTNTLFEESKQFWSYLVEKGNLGDPGRFVHPVPHMSFVRGEDDVRFLRDRYHAMREHPCFEGMEYTEDRSVIGQWAPLLLDGREGDEPLAATRVATGTDVDFGALTRQLLARLEEKPDEQVRITTGQTVEDLTRNEDGSWRIKIAGNDDTQRTLNARFVFLGAGGASLHLLQKSGIPEGKGYAGFPVSGQWLRCDKPEIVSRHNAKVYSKAPIGAPPMSVPHLDTRNVDGSPSLLFGPFAGFTTKFLKTGSVMDLAKSVRSSNLSPMLSVARDNFSLVKYLIDQVRLSHEQRVDELRTFYPMAKNDDWRLEVAGQRVQVIKKDPQKGGILQFGTEVVAASDGSLAALLGASPGASTATSIMLNLVEQCFPEKFASQAWQQRLHDLVPARAETLADNGDLLRDVRRRTHDTLKLVDTQPSPEPVT</sequence>
<organism>
    <name type="scientific">Chromohalobacter salexigens (strain ATCC BAA-138 / DSM 3043 / CIP 106854 / NCIMB 13768 / 1H11)</name>
    <dbReference type="NCBI Taxonomy" id="290398"/>
    <lineage>
        <taxon>Bacteria</taxon>
        <taxon>Pseudomonadati</taxon>
        <taxon>Pseudomonadota</taxon>
        <taxon>Gammaproteobacteria</taxon>
        <taxon>Oceanospirillales</taxon>
        <taxon>Halomonadaceae</taxon>
        <taxon>Chromohalobacter</taxon>
    </lineage>
</organism>
<dbReference type="EC" id="1.1.5.4" evidence="1"/>
<dbReference type="EMBL" id="CP000285">
    <property type="protein sequence ID" value="ABE59926.1"/>
    <property type="molecule type" value="Genomic_DNA"/>
</dbReference>
<dbReference type="RefSeq" id="WP_011507872.1">
    <property type="nucleotide sequence ID" value="NC_007963.1"/>
</dbReference>
<dbReference type="SMR" id="Q1QUD2"/>
<dbReference type="STRING" id="290398.Csal_2579"/>
<dbReference type="GeneID" id="95335280"/>
<dbReference type="KEGG" id="csa:Csal_2579"/>
<dbReference type="eggNOG" id="COG0579">
    <property type="taxonomic scope" value="Bacteria"/>
</dbReference>
<dbReference type="HOGENOM" id="CLU_028151_0_0_6"/>
<dbReference type="OrthoDB" id="9763983at2"/>
<dbReference type="UniPathway" id="UPA00223">
    <property type="reaction ID" value="UER01008"/>
</dbReference>
<dbReference type="Proteomes" id="UP000000239">
    <property type="component" value="Chromosome"/>
</dbReference>
<dbReference type="GO" id="GO:0047545">
    <property type="term" value="F:2-hydroxyglutarate dehydrogenase activity"/>
    <property type="evidence" value="ECO:0007669"/>
    <property type="project" value="TreeGrafter"/>
</dbReference>
<dbReference type="GO" id="GO:0008924">
    <property type="term" value="F:L-malate dehydrogenase (quinone) activity"/>
    <property type="evidence" value="ECO:0007669"/>
    <property type="project" value="UniProtKB-UniRule"/>
</dbReference>
<dbReference type="GO" id="GO:0006099">
    <property type="term" value="P:tricarboxylic acid cycle"/>
    <property type="evidence" value="ECO:0007669"/>
    <property type="project" value="UniProtKB-UniRule"/>
</dbReference>
<dbReference type="Gene3D" id="3.30.9.10">
    <property type="entry name" value="D-Amino Acid Oxidase, subunit A, domain 2"/>
    <property type="match status" value="1"/>
</dbReference>
<dbReference type="Gene3D" id="3.50.50.60">
    <property type="entry name" value="FAD/NAD(P)-binding domain"/>
    <property type="match status" value="1"/>
</dbReference>
<dbReference type="HAMAP" id="MF_00212">
    <property type="entry name" value="MQO"/>
    <property type="match status" value="1"/>
</dbReference>
<dbReference type="InterPro" id="IPR036188">
    <property type="entry name" value="FAD/NAD-bd_sf"/>
</dbReference>
<dbReference type="InterPro" id="IPR006231">
    <property type="entry name" value="MQO"/>
</dbReference>
<dbReference type="NCBIfam" id="TIGR01320">
    <property type="entry name" value="mal_quin_oxido"/>
    <property type="match status" value="1"/>
</dbReference>
<dbReference type="NCBIfam" id="NF003603">
    <property type="entry name" value="PRK05257.1-1"/>
    <property type="match status" value="1"/>
</dbReference>
<dbReference type="NCBIfam" id="NF003605">
    <property type="entry name" value="PRK05257.1-4"/>
    <property type="match status" value="1"/>
</dbReference>
<dbReference type="NCBIfam" id="NF003606">
    <property type="entry name" value="PRK05257.2-1"/>
    <property type="match status" value="1"/>
</dbReference>
<dbReference type="NCBIfam" id="NF003611">
    <property type="entry name" value="PRK05257.3-2"/>
    <property type="match status" value="1"/>
</dbReference>
<dbReference type="NCBIfam" id="NF003613">
    <property type="entry name" value="PRK05257.3-4"/>
    <property type="match status" value="1"/>
</dbReference>
<dbReference type="NCBIfam" id="NF009875">
    <property type="entry name" value="PRK13339.1"/>
    <property type="match status" value="1"/>
</dbReference>
<dbReference type="PANTHER" id="PTHR43104">
    <property type="entry name" value="L-2-HYDROXYGLUTARATE DEHYDROGENASE, MITOCHONDRIAL"/>
    <property type="match status" value="1"/>
</dbReference>
<dbReference type="PANTHER" id="PTHR43104:SF2">
    <property type="entry name" value="L-2-HYDROXYGLUTARATE DEHYDROGENASE, MITOCHONDRIAL"/>
    <property type="match status" value="1"/>
</dbReference>
<dbReference type="Pfam" id="PF06039">
    <property type="entry name" value="Mqo"/>
    <property type="match status" value="1"/>
</dbReference>
<dbReference type="SUPFAM" id="SSF51905">
    <property type="entry name" value="FAD/NAD(P)-binding domain"/>
    <property type="match status" value="1"/>
</dbReference>
<keyword id="KW-0274">FAD</keyword>
<keyword id="KW-0285">Flavoprotein</keyword>
<keyword id="KW-0560">Oxidoreductase</keyword>
<keyword id="KW-1185">Reference proteome</keyword>
<keyword id="KW-0816">Tricarboxylic acid cycle</keyword>
<accession>Q1QUD2</accession>
<gene>
    <name evidence="1" type="primary">mqo</name>
    <name type="ordered locus">Csal_2579</name>
</gene>
<protein>
    <recommendedName>
        <fullName evidence="1">Probable malate:quinone oxidoreductase</fullName>
        <ecNumber evidence="1">1.1.5.4</ecNumber>
    </recommendedName>
    <alternativeName>
        <fullName evidence="1">MQO</fullName>
    </alternativeName>
    <alternativeName>
        <fullName evidence="1">Malate dehydrogenase [quinone]</fullName>
    </alternativeName>
</protein>
<comment type="catalytic activity">
    <reaction evidence="1">
        <text>(S)-malate + a quinone = a quinol + oxaloacetate</text>
        <dbReference type="Rhea" id="RHEA:46012"/>
        <dbReference type="ChEBI" id="CHEBI:15589"/>
        <dbReference type="ChEBI" id="CHEBI:16452"/>
        <dbReference type="ChEBI" id="CHEBI:24646"/>
        <dbReference type="ChEBI" id="CHEBI:132124"/>
        <dbReference type="EC" id="1.1.5.4"/>
    </reaction>
</comment>
<comment type="cofactor">
    <cofactor evidence="1">
        <name>FAD</name>
        <dbReference type="ChEBI" id="CHEBI:57692"/>
    </cofactor>
</comment>
<comment type="pathway">
    <text evidence="1">Carbohydrate metabolism; tricarboxylic acid cycle; oxaloacetate from (S)-malate (quinone route): step 1/1.</text>
</comment>
<comment type="similarity">
    <text evidence="1">Belongs to the MQO family.</text>
</comment>
<evidence type="ECO:0000255" key="1">
    <source>
        <dbReference type="HAMAP-Rule" id="MF_00212"/>
    </source>
</evidence>
<feature type="chain" id="PRO_1000023794" description="Probable malate:quinone oxidoreductase">
    <location>
        <begin position="1"/>
        <end position="508"/>
    </location>
</feature>